<evidence type="ECO:0000255" key="1">
    <source>
        <dbReference type="HAMAP-Rule" id="MF_01405"/>
    </source>
</evidence>
<evidence type="ECO:0000256" key="2">
    <source>
        <dbReference type="SAM" id="MobiDB-lite"/>
    </source>
</evidence>
<keyword id="KW-0378">Hydrolase</keyword>
<keyword id="KW-0460">Magnesium</keyword>
<keyword id="KW-0479">Metal-binding</keyword>
<keyword id="KW-0546">Nucleotide metabolism</keyword>
<keyword id="KW-0547">Nucleotide-binding</keyword>
<accession>B3DTK7</accession>
<dbReference type="EC" id="3.6.1.66" evidence="1"/>
<dbReference type="EMBL" id="CP000605">
    <property type="protein sequence ID" value="ACD98476.1"/>
    <property type="molecule type" value="Genomic_DNA"/>
</dbReference>
<dbReference type="RefSeq" id="WP_007057825.1">
    <property type="nucleotide sequence ID" value="NZ_AABM02000007.1"/>
</dbReference>
<dbReference type="SMR" id="B3DTK7"/>
<dbReference type="KEGG" id="blj:BLD_1030"/>
<dbReference type="HOGENOM" id="CLU_082080_0_1_11"/>
<dbReference type="Proteomes" id="UP000002419">
    <property type="component" value="Chromosome"/>
</dbReference>
<dbReference type="GO" id="GO:0005829">
    <property type="term" value="C:cytosol"/>
    <property type="evidence" value="ECO:0007669"/>
    <property type="project" value="TreeGrafter"/>
</dbReference>
<dbReference type="GO" id="GO:0035870">
    <property type="term" value="F:dITP diphosphatase activity"/>
    <property type="evidence" value="ECO:0007669"/>
    <property type="project" value="RHEA"/>
</dbReference>
<dbReference type="GO" id="GO:0036220">
    <property type="term" value="F:ITP diphosphatase activity"/>
    <property type="evidence" value="ECO:0007669"/>
    <property type="project" value="UniProtKB-EC"/>
</dbReference>
<dbReference type="GO" id="GO:0046872">
    <property type="term" value="F:metal ion binding"/>
    <property type="evidence" value="ECO:0007669"/>
    <property type="project" value="UniProtKB-KW"/>
</dbReference>
<dbReference type="GO" id="GO:0000166">
    <property type="term" value="F:nucleotide binding"/>
    <property type="evidence" value="ECO:0007669"/>
    <property type="project" value="UniProtKB-KW"/>
</dbReference>
<dbReference type="GO" id="GO:0017111">
    <property type="term" value="F:ribonucleoside triphosphate phosphatase activity"/>
    <property type="evidence" value="ECO:0007669"/>
    <property type="project" value="InterPro"/>
</dbReference>
<dbReference type="GO" id="GO:0036222">
    <property type="term" value="F:XTP diphosphatase activity"/>
    <property type="evidence" value="ECO:0007669"/>
    <property type="project" value="RHEA"/>
</dbReference>
<dbReference type="GO" id="GO:0009117">
    <property type="term" value="P:nucleotide metabolic process"/>
    <property type="evidence" value="ECO:0007669"/>
    <property type="project" value="UniProtKB-KW"/>
</dbReference>
<dbReference type="GO" id="GO:0009146">
    <property type="term" value="P:purine nucleoside triphosphate catabolic process"/>
    <property type="evidence" value="ECO:0007669"/>
    <property type="project" value="UniProtKB-UniRule"/>
</dbReference>
<dbReference type="CDD" id="cd00515">
    <property type="entry name" value="HAM1"/>
    <property type="match status" value="1"/>
</dbReference>
<dbReference type="Gene3D" id="3.90.950.10">
    <property type="match status" value="1"/>
</dbReference>
<dbReference type="HAMAP" id="MF_01405">
    <property type="entry name" value="Non_canon_purine_NTPase"/>
    <property type="match status" value="1"/>
</dbReference>
<dbReference type="InterPro" id="IPR020922">
    <property type="entry name" value="dITP/XTP_pyrophosphatase"/>
</dbReference>
<dbReference type="InterPro" id="IPR029001">
    <property type="entry name" value="ITPase-like_fam"/>
</dbReference>
<dbReference type="InterPro" id="IPR002637">
    <property type="entry name" value="RdgB/HAM1"/>
</dbReference>
<dbReference type="PANTHER" id="PTHR11067:SF9">
    <property type="entry name" value="INOSINE TRIPHOSPHATE PYROPHOSPHATASE"/>
    <property type="match status" value="1"/>
</dbReference>
<dbReference type="PANTHER" id="PTHR11067">
    <property type="entry name" value="INOSINE TRIPHOSPHATE PYROPHOSPHATASE/HAM1 PROTEIN"/>
    <property type="match status" value="1"/>
</dbReference>
<dbReference type="Pfam" id="PF01725">
    <property type="entry name" value="Ham1p_like"/>
    <property type="match status" value="2"/>
</dbReference>
<dbReference type="SUPFAM" id="SSF52972">
    <property type="entry name" value="ITPase-like"/>
    <property type="match status" value="1"/>
</dbReference>
<comment type="function">
    <text evidence="1">Pyrophosphatase that catalyzes the hydrolysis of nucleoside triphosphates to their monophosphate derivatives, with a high preference for the non-canonical purine nucleotides XTP (xanthosine triphosphate), dITP (deoxyinosine triphosphate) and ITP. Seems to function as a house-cleaning enzyme that removes non-canonical purine nucleotides from the nucleotide pool, thus preventing their incorporation into DNA/RNA and avoiding chromosomal lesions.</text>
</comment>
<comment type="catalytic activity">
    <reaction evidence="1">
        <text>XTP + H2O = XMP + diphosphate + H(+)</text>
        <dbReference type="Rhea" id="RHEA:28610"/>
        <dbReference type="ChEBI" id="CHEBI:15377"/>
        <dbReference type="ChEBI" id="CHEBI:15378"/>
        <dbReference type="ChEBI" id="CHEBI:33019"/>
        <dbReference type="ChEBI" id="CHEBI:57464"/>
        <dbReference type="ChEBI" id="CHEBI:61314"/>
        <dbReference type="EC" id="3.6.1.66"/>
    </reaction>
</comment>
<comment type="catalytic activity">
    <reaction evidence="1">
        <text>dITP + H2O = dIMP + diphosphate + H(+)</text>
        <dbReference type="Rhea" id="RHEA:28342"/>
        <dbReference type="ChEBI" id="CHEBI:15377"/>
        <dbReference type="ChEBI" id="CHEBI:15378"/>
        <dbReference type="ChEBI" id="CHEBI:33019"/>
        <dbReference type="ChEBI" id="CHEBI:61194"/>
        <dbReference type="ChEBI" id="CHEBI:61382"/>
        <dbReference type="EC" id="3.6.1.66"/>
    </reaction>
</comment>
<comment type="catalytic activity">
    <reaction evidence="1">
        <text>ITP + H2O = IMP + diphosphate + H(+)</text>
        <dbReference type="Rhea" id="RHEA:29399"/>
        <dbReference type="ChEBI" id="CHEBI:15377"/>
        <dbReference type="ChEBI" id="CHEBI:15378"/>
        <dbReference type="ChEBI" id="CHEBI:33019"/>
        <dbReference type="ChEBI" id="CHEBI:58053"/>
        <dbReference type="ChEBI" id="CHEBI:61402"/>
        <dbReference type="EC" id="3.6.1.66"/>
    </reaction>
</comment>
<comment type="cofactor">
    <cofactor evidence="1">
        <name>Mg(2+)</name>
        <dbReference type="ChEBI" id="CHEBI:18420"/>
    </cofactor>
    <text evidence="1">Binds 1 Mg(2+) ion per subunit.</text>
</comment>
<comment type="subunit">
    <text evidence="1">Homodimer.</text>
</comment>
<comment type="similarity">
    <text evidence="1">Belongs to the HAM1 NTPase family.</text>
</comment>
<reference key="1">
    <citation type="journal article" date="2008" name="BMC Genomics">
        <title>Comparative genomic analysis of the gut bacterium Bifidobacterium longum reveals loci susceptible to deletion during pure culture growth.</title>
        <authorList>
            <person name="Lee J.H."/>
            <person name="Karamychev V.N."/>
            <person name="Kozyavkin S.A."/>
            <person name="Mills D."/>
            <person name="Pavlov A.R."/>
            <person name="Pavlova N.V."/>
            <person name="Polouchine N.N."/>
            <person name="Richardson P.M."/>
            <person name="Shakhova V.V."/>
            <person name="Slesarev A.I."/>
            <person name="Weimer B."/>
            <person name="O'Sullivan D.J."/>
        </authorList>
    </citation>
    <scope>NUCLEOTIDE SEQUENCE [LARGE SCALE GENOMIC DNA]</scope>
    <source>
        <strain>DJO10A</strain>
    </source>
</reference>
<protein>
    <recommendedName>
        <fullName evidence="1">dITP/XTP pyrophosphatase</fullName>
        <ecNumber evidence="1">3.6.1.66</ecNumber>
    </recommendedName>
    <alternativeName>
        <fullName evidence="1">Non-canonical purine NTP pyrophosphatase</fullName>
    </alternativeName>
    <alternativeName>
        <fullName evidence="1">Non-standard purine NTP pyrophosphatase</fullName>
    </alternativeName>
    <alternativeName>
        <fullName evidence="1">Nucleoside-triphosphate diphosphatase</fullName>
    </alternativeName>
    <alternativeName>
        <fullName evidence="1">Nucleoside-triphosphate pyrophosphatase</fullName>
        <shortName evidence="1">NTPase</shortName>
    </alternativeName>
</protein>
<organism>
    <name type="scientific">Bifidobacterium longum (strain DJO10A)</name>
    <dbReference type="NCBI Taxonomy" id="205913"/>
    <lineage>
        <taxon>Bacteria</taxon>
        <taxon>Bacillati</taxon>
        <taxon>Actinomycetota</taxon>
        <taxon>Actinomycetes</taxon>
        <taxon>Bifidobacteriales</taxon>
        <taxon>Bifidobacteriaceae</taxon>
        <taxon>Bifidobacterium</taxon>
    </lineage>
</organism>
<gene>
    <name type="ordered locus">BLD_1030</name>
</gene>
<proteinExistence type="inferred from homology"/>
<name>IXTPA_BIFLD</name>
<feature type="chain" id="PRO_1000145480" description="dITP/XTP pyrophosphatase">
    <location>
        <begin position="1"/>
        <end position="252"/>
    </location>
</feature>
<feature type="region of interest" description="Disordered" evidence="2">
    <location>
        <begin position="202"/>
        <end position="229"/>
    </location>
</feature>
<feature type="active site" description="Proton acceptor" evidence="1">
    <location>
        <position position="74"/>
    </location>
</feature>
<feature type="binding site" evidence="1">
    <location>
        <begin position="7"/>
        <end position="12"/>
    </location>
    <ligand>
        <name>substrate</name>
    </ligand>
</feature>
<feature type="binding site" evidence="1">
    <location>
        <position position="74"/>
    </location>
    <ligand>
        <name>Mg(2+)</name>
        <dbReference type="ChEBI" id="CHEBI:18420"/>
    </ligand>
</feature>
<feature type="binding site" evidence="1">
    <location>
        <position position="75"/>
    </location>
    <ligand>
        <name>substrate</name>
    </ligand>
</feature>
<feature type="binding site" evidence="1">
    <location>
        <begin position="193"/>
        <end position="196"/>
    </location>
    <ligand>
        <name>substrate</name>
    </ligand>
</feature>
<feature type="binding site" evidence="1">
    <location>
        <position position="230"/>
    </location>
    <ligand>
        <name>substrate</name>
    </ligand>
</feature>
<feature type="binding site" evidence="1">
    <location>
        <begin position="235"/>
        <end position="236"/>
    </location>
    <ligand>
        <name>substrate</name>
    </ligand>
</feature>
<sequence length="252" mass="26448">MQIVVATHNEGKLVEIRRILEEDLGADAENIELVSAGSLHLPDPVETGVTFQENALLKARAVAIRTGLPAVADDSGLIVDVMGNAPGILSARWAGAHGHDKANNALLLAQIEDIPDDKRTARFRCAAALVVPDTETGADVTGGVAADGITVHTTAADGSPAPVHARYAIKSETVELGDMPGRIIREARGEHGFGYDPLFVPDDQPAGRVSTEPDHEGEPLTSAEMTPAEKNAISHRGKALKALVPAIEALLH</sequence>